<name>RPB11_YEAST</name>
<accession>P38902</accession>
<accession>D6W262</accession>
<organism>
    <name type="scientific">Saccharomyces cerevisiae (strain ATCC 204508 / S288c)</name>
    <name type="common">Baker's yeast</name>
    <dbReference type="NCBI Taxonomy" id="559292"/>
    <lineage>
        <taxon>Eukaryota</taxon>
        <taxon>Fungi</taxon>
        <taxon>Dikarya</taxon>
        <taxon>Ascomycota</taxon>
        <taxon>Saccharomycotina</taxon>
        <taxon>Saccharomycetes</taxon>
        <taxon>Saccharomycetales</taxon>
        <taxon>Saccharomycetaceae</taxon>
        <taxon>Saccharomyces</taxon>
    </lineage>
</organism>
<proteinExistence type="evidence at protein level"/>
<protein>
    <recommendedName>
        <fullName>DNA-directed RNA polymerase II subunit RPB11</fullName>
        <shortName>RNA polymerase II subunit B11</shortName>
    </recommendedName>
    <alternativeName>
        <fullName>B13.6</fullName>
    </alternativeName>
    <alternativeName>
        <fullName>DNA-directed RNA polymerase II 13.6 kDa polypeptide</fullName>
    </alternativeName>
</protein>
<keyword id="KW-0002">3D-structure</keyword>
<keyword id="KW-0903">Direct protein sequencing</keyword>
<keyword id="KW-0240">DNA-directed RNA polymerase</keyword>
<keyword id="KW-0539">Nucleus</keyword>
<keyword id="KW-1185">Reference proteome</keyword>
<keyword id="KW-0804">Transcription</keyword>
<comment type="function">
    <text evidence="5">DNA-dependent RNA polymerase catalyzes the transcription of DNA into RNA using the four ribonucleoside triphosphates as substrates. Component of RNA polymerase II which synthesizes mRNA precursors and many functional non-coding RNAs. Pol II is the central component of the basal RNA polymerase II transcription machinery. It is composed of mobile elements that move relative to each other. RPB11 is part of the core element with the central large cleft. Seems to be involved transcript termination.</text>
</comment>
<comment type="subunit">
    <text evidence="1 2 4">Component of the RNA polymerase II (Pol II) complex consisting of 12 subunits.</text>
</comment>
<comment type="interaction">
    <interactant intactId="EBI-15806">
        <id>P38902</id>
    </interactant>
    <interactant intactId="EBI-15773">
        <id>P16370</id>
        <label>RPB3</label>
    </interactant>
    <organismsDiffer>false</organismsDiffer>
    <experiments>5</experiments>
</comment>
<comment type="interaction">
    <interactant intactId="EBI-15806">
        <id>P38902</id>
    </interactant>
    <interactant intactId="EBI-15794">
        <id>P20436</id>
        <label>RPB8</label>
    </interactant>
    <organismsDiffer>false</organismsDiffer>
    <experiments>4</experiments>
</comment>
<comment type="subcellular location">
    <subcellularLocation>
        <location>Nucleus</location>
    </subcellularLocation>
</comment>
<comment type="miscellaneous">
    <text evidence="3">Present with 4280 molecules/cell in log phase SD medium.</text>
</comment>
<comment type="similarity">
    <text evidence="6">Belongs to the archaeal Rpo11/eukaryotic RPB11/RPC19 RNA polymerase subunit family.</text>
</comment>
<gene>
    <name type="primary">RPB11</name>
    <name type="ordered locus">YOL005C</name>
</gene>
<reference key="1">
    <citation type="journal article" date="1993" name="Gene Expr.">
        <title>Yeast RNA polymerase II subunit RPB11 is related to a subunit shared by RNA polymerase I and III.</title>
        <authorList>
            <person name="Woychik N.A."/>
            <person name="McKune K."/>
            <person name="Lane W.S."/>
            <person name="Young R.A."/>
        </authorList>
    </citation>
    <scope>NUCLEOTIDE SEQUENCE [GENOMIC DNA]</scope>
    <scope>PROTEIN SEQUENCE OF 27-37; 75-84; 98-102 AND 103-116</scope>
    <source>
        <strain>X2180-2</strain>
    </source>
</reference>
<reference key="2">
    <citation type="journal article" date="1997" name="Nature">
        <title>The nucleotide sequence of Saccharomyces cerevisiae chromosome XV.</title>
        <authorList>
            <person name="Dujon B."/>
            <person name="Albermann K."/>
            <person name="Aldea M."/>
            <person name="Alexandraki D."/>
            <person name="Ansorge W."/>
            <person name="Arino J."/>
            <person name="Benes V."/>
            <person name="Bohn C."/>
            <person name="Bolotin-Fukuhara M."/>
            <person name="Bordonne R."/>
            <person name="Boyer J."/>
            <person name="Camasses A."/>
            <person name="Casamayor A."/>
            <person name="Casas C."/>
            <person name="Cheret G."/>
            <person name="Cziepluch C."/>
            <person name="Daignan-Fornier B."/>
            <person name="Dang V.-D."/>
            <person name="de Haan M."/>
            <person name="Delius H."/>
            <person name="Durand P."/>
            <person name="Fairhead C."/>
            <person name="Feldmann H."/>
            <person name="Gaillon L."/>
            <person name="Galisson F."/>
            <person name="Gamo F.-J."/>
            <person name="Gancedo C."/>
            <person name="Goffeau A."/>
            <person name="Goulding S.E."/>
            <person name="Grivell L.A."/>
            <person name="Habbig B."/>
            <person name="Hand N.J."/>
            <person name="Hani J."/>
            <person name="Hattenhorst U."/>
            <person name="Hebling U."/>
            <person name="Hernando Y."/>
            <person name="Herrero E."/>
            <person name="Heumann K."/>
            <person name="Hiesel R."/>
            <person name="Hilger F."/>
            <person name="Hofmann B."/>
            <person name="Hollenberg C.P."/>
            <person name="Hughes B."/>
            <person name="Jauniaux J.-C."/>
            <person name="Kalogeropoulos A."/>
            <person name="Katsoulou C."/>
            <person name="Kordes E."/>
            <person name="Lafuente M.J."/>
            <person name="Landt O."/>
            <person name="Louis E.J."/>
            <person name="Maarse A.C."/>
            <person name="Madania A."/>
            <person name="Mannhaupt G."/>
            <person name="Marck C."/>
            <person name="Martin R.P."/>
            <person name="Mewes H.-W."/>
            <person name="Michaux G."/>
            <person name="Paces V."/>
            <person name="Parle-McDermott A.G."/>
            <person name="Pearson B.M."/>
            <person name="Perrin A."/>
            <person name="Pettersson B."/>
            <person name="Poch O."/>
            <person name="Pohl T.M."/>
            <person name="Poirey R."/>
            <person name="Portetelle D."/>
            <person name="Pujol A."/>
            <person name="Purnelle B."/>
            <person name="Ramezani Rad M."/>
            <person name="Rechmann S."/>
            <person name="Schwager C."/>
            <person name="Schweizer M."/>
            <person name="Sor F."/>
            <person name="Sterky F."/>
            <person name="Tarassov I.A."/>
            <person name="Teodoru C."/>
            <person name="Tettelin H."/>
            <person name="Thierry A."/>
            <person name="Tobiasch E."/>
            <person name="Tzermia M."/>
            <person name="Uhlen M."/>
            <person name="Unseld M."/>
            <person name="Valens M."/>
            <person name="Vandenbol M."/>
            <person name="Vetter I."/>
            <person name="Vlcek C."/>
            <person name="Voet M."/>
            <person name="Volckaert G."/>
            <person name="Voss H."/>
            <person name="Wambutt R."/>
            <person name="Wedler H."/>
            <person name="Wiemann S."/>
            <person name="Winsor B."/>
            <person name="Wolfe K.H."/>
            <person name="Zollner A."/>
            <person name="Zumstein E."/>
            <person name="Kleine K."/>
        </authorList>
    </citation>
    <scope>NUCLEOTIDE SEQUENCE [LARGE SCALE GENOMIC DNA]</scope>
    <source>
        <strain>ATCC 204508 / S288c</strain>
    </source>
</reference>
<reference key="3">
    <citation type="journal article" date="2014" name="G3 (Bethesda)">
        <title>The reference genome sequence of Saccharomyces cerevisiae: Then and now.</title>
        <authorList>
            <person name="Engel S.R."/>
            <person name="Dietrich F.S."/>
            <person name="Fisk D.G."/>
            <person name="Binkley G."/>
            <person name="Balakrishnan R."/>
            <person name="Costanzo M.C."/>
            <person name="Dwight S.S."/>
            <person name="Hitz B.C."/>
            <person name="Karra K."/>
            <person name="Nash R.S."/>
            <person name="Weng S."/>
            <person name="Wong E.D."/>
            <person name="Lloyd P."/>
            <person name="Skrzypek M.S."/>
            <person name="Miyasato S.R."/>
            <person name="Simison M."/>
            <person name="Cherry J.M."/>
        </authorList>
    </citation>
    <scope>GENOME REANNOTATION</scope>
    <source>
        <strain>ATCC 204508 / S288c</strain>
    </source>
</reference>
<reference key="4">
    <citation type="journal article" date="2007" name="Genome Res.">
        <title>Approaching a complete repository of sequence-verified protein-encoding clones for Saccharomyces cerevisiae.</title>
        <authorList>
            <person name="Hu Y."/>
            <person name="Rolfs A."/>
            <person name="Bhullar B."/>
            <person name="Murthy T.V.S."/>
            <person name="Zhu C."/>
            <person name="Berger M.F."/>
            <person name="Camargo A.A."/>
            <person name="Kelley F."/>
            <person name="McCarron S."/>
            <person name="Jepson D."/>
            <person name="Richardson A."/>
            <person name="Raphael J."/>
            <person name="Moreira D."/>
            <person name="Taycher E."/>
            <person name="Zuo D."/>
            <person name="Mohr S."/>
            <person name="Kane M.F."/>
            <person name="Williamson J."/>
            <person name="Simpson A.J.G."/>
            <person name="Bulyk M.L."/>
            <person name="Harlow E."/>
            <person name="Marsischky G."/>
            <person name="Kolodner R.D."/>
            <person name="LaBaer J."/>
        </authorList>
    </citation>
    <scope>NUCLEOTIDE SEQUENCE [GENOMIC DNA]</scope>
    <source>
        <strain>ATCC 204508 / S288c</strain>
    </source>
</reference>
<reference key="5">
    <citation type="journal article" date="2003" name="Nature">
        <title>Global analysis of protein expression in yeast.</title>
        <authorList>
            <person name="Ghaemmaghami S."/>
            <person name="Huh W.-K."/>
            <person name="Bower K."/>
            <person name="Howson R.W."/>
            <person name="Belle A."/>
            <person name="Dephoure N."/>
            <person name="O'Shea E.K."/>
            <person name="Weissman J.S."/>
        </authorList>
    </citation>
    <scope>LEVEL OF PROTEIN EXPRESSION [LARGE SCALE ANALYSIS]</scope>
</reference>
<reference key="6">
    <citation type="journal article" date="2006" name="Mol. Cell. Biol.">
        <title>cis- and trans-Acting determinants of transcription termination by yeast RNA polymerase II.</title>
        <authorList>
            <person name="Steinmetz E.J."/>
            <person name="Ng S.B."/>
            <person name="Cloute J.P."/>
            <person name="Brow D.A."/>
        </authorList>
    </citation>
    <scope>FUNCTION</scope>
    <scope>MUTAGENESIS OF GLU-108; LEU-111 AND LEU-114</scope>
</reference>
<reference key="7">
    <citation type="journal article" date="2003" name="Mol. Cell">
        <title>RNA polymerase II/TFIIF structure and conserved organization of the initiation complex.</title>
        <authorList>
            <person name="Chung W.H."/>
            <person name="Craighead J.L."/>
            <person name="Chang W.H."/>
            <person name="Ezeokonkwo C."/>
            <person name="Bareket-Samish A."/>
            <person name="Kornberg R.D."/>
            <person name="Asturias F.J."/>
        </authorList>
    </citation>
    <scope>ELECTRON MICROSCOPY OF THE RNA POL II/TFIIF COMPLEX</scope>
</reference>
<reference key="8">
    <citation type="journal article" date="2001" name="Science">
        <title>Structural basis of transcription: RNA polymerase II at 2.8 A resolution.</title>
        <authorList>
            <person name="Cramer P."/>
            <person name="Bushnell D.A."/>
            <person name="Kornberg R.D."/>
        </authorList>
    </citation>
    <scope>X-RAY CRYSTALLOGRAPHY (2.8 ANGSTROMS) OF THE RNA POL II CORE COMPLEX</scope>
</reference>
<reference key="9">
    <citation type="journal article" date="2001" name="Science">
        <title>Structural basis of transcription: an RNA polymerase II elongation complex at 3.3 A resolution.</title>
        <authorList>
            <person name="Gnatt A.L."/>
            <person name="Cramer P."/>
            <person name="Fu J."/>
            <person name="Bushnell D.A."/>
            <person name="Kornberg R.D."/>
        </authorList>
    </citation>
    <scope>X-RAY CRYSTALLOGRAPHY (3.3 ANGSTROMS) OF THE RNA POL II CORE COMPLEX</scope>
</reference>
<reference key="10">
    <citation type="journal article" date="2002" name="Proc. Natl. Acad. Sci. U.S.A.">
        <title>Structural basis of transcription: alpha-amanitin-RNA polymerase II cocrystal at 2.8 A resolution.</title>
        <authorList>
            <person name="Bushnell D.A."/>
            <person name="Cramer P."/>
            <person name="Kornberg R.D."/>
        </authorList>
    </citation>
    <scope>X-RAY CRYSTALLOGRAPHY (2.8 ANGSTROMS) OF THE RNA POL II CORE COMPLEX IN COMPLEX WITH ALPHA-AMANITIN</scope>
</reference>
<reference key="11">
    <citation type="journal article" date="2003" name="Cell">
        <title>Architecture of the RNA polymerase II-TFIIS complex and implications for mRNA cleavage.</title>
        <authorList>
            <person name="Kettenberger H."/>
            <person name="Armache K.J."/>
            <person name="Cramer P."/>
        </authorList>
    </citation>
    <scope>X-RAY CRYSTALLOGRAPHY (3.8 ANGSTROMS) OF THE RNA POL II COMPLEX IN COMPLEX WITH DST1</scope>
</reference>
<reference key="12">
    <citation type="journal article" date="2003" name="Proc. Natl. Acad. Sci. U.S.A.">
        <title>Architecture of initiation-competent 12-subunit RNA polymerase II.</title>
        <authorList>
            <person name="Armache K.J."/>
            <person name="Kettenberger H."/>
            <person name="Cramer P."/>
        </authorList>
    </citation>
    <scope>X-RAY CRYSTALLOGRAPHY (4.2 ANGSTROMS) OF THE RNA POL II COMPLEX</scope>
</reference>
<reference key="13">
    <citation type="journal article" date="2003" name="Proc. Natl. Acad. Sci. U.S.A.">
        <title>Complete, 12-subunit RNA polymerase II at 4.1-A resolution: implications for the initiation of transcription.</title>
        <authorList>
            <person name="Bushnell D.A."/>
            <person name="Kornberg R.D."/>
        </authorList>
    </citation>
    <scope>X-RAY CRYSTALLOGRAPHY (4.1 ANGSTROMS) OF THE RNA POL II CORE COMPLEX</scope>
</reference>
<reference key="14">
    <citation type="journal article" date="2004" name="Cell">
        <title>Structural basis of transcription: nucleotide selection by rotation in the RNA polymerase II active center.</title>
        <authorList>
            <person name="Westover K.D."/>
            <person name="Bushnell D.A."/>
            <person name="Kornberg R.D."/>
        </authorList>
    </citation>
    <scope>X-RAY CRYSTALLOGRAPHY (2.3 ANGSTROMS) OF THE RNA POL II CORE COMPLEX</scope>
</reference>
<reference key="15">
    <citation type="journal article" date="2004" name="Mol. Cell">
        <title>Complete RNA polymerase II elongation complex structure and its interactions with NTP and TFIIS.</title>
        <authorList>
            <person name="Kettenberger H."/>
            <person name="Armache K.J."/>
            <person name="Cramer P."/>
        </authorList>
    </citation>
    <scope>X-RAY CRYSTALLOGRAPHY (4.5 ANGSTROMS)</scope>
</reference>
<reference key="16">
    <citation type="journal article" date="2004" name="Science">
        <title>Structural basis of transcription: an RNA polymerase II-TFIIB cocrystal at 4.5 Angstroms.</title>
        <authorList>
            <person name="Bushnell D.A."/>
            <person name="Westover K.D."/>
            <person name="Davis R.E."/>
            <person name="Kornberg R.D."/>
        </authorList>
    </citation>
    <scope>X-RAY CRYSTALLOGRAPHY (4.5 ANGSTROMS) OF THE RNA POL II CORE COMPLEX</scope>
</reference>
<reference key="17">
    <citation type="journal article" date="2005" name="J. Biol. Chem.">
        <title>Structures of complete RNA polymerase II and its subcomplex, Rpb4/7.</title>
        <authorList>
            <person name="Armache K.J."/>
            <person name="Mitterweger S."/>
            <person name="Meinhart A."/>
            <person name="Cramer P."/>
        </authorList>
    </citation>
    <scope>X-RAY CRYSTALLOGRAPHY (3.8 ANGSTROMS) OF THE RNA POL II COMPLEX</scope>
</reference>
<reference key="18">
    <citation type="journal article" date="2006" name="Nat. Struct. Mol. Biol.">
        <title>Structure of an RNA polymerase II-RNA inhibitor complex elucidates transcription regulation by noncoding RNAs.</title>
        <authorList>
            <person name="Kettenberger H."/>
            <person name="Eisenfuhr A."/>
            <person name="Brueckner F."/>
            <person name="Theis M."/>
            <person name="Famulok M."/>
            <person name="Cramer P."/>
        </authorList>
    </citation>
    <scope>X-RAY CRYSTALLOGRAPHY (3.8 ANGSTROMS) OF THE RNA POL II COMPLEX IN COMPLEX WITH INHIBITING NON-CODING RNA</scope>
</reference>
<reference key="19">
    <citation type="journal article" date="2006" name="Structure">
        <title>Phasing RNA polymerase II using intrinsically bound Zn atoms: an updated structural model.</title>
        <authorList>
            <person name="Meyer P.A."/>
            <person name="Ye P."/>
            <person name="Zhang M."/>
            <person name="Suh M.H."/>
            <person name="Fu J."/>
        </authorList>
    </citation>
    <scope>X-RAY CRYSTALLOGRAPHY (4.15 ANGSTROMS) OF THE RNA POL II COMPLEX</scope>
</reference>
<evidence type="ECO:0000269" key="1">
    <source>
    </source>
</evidence>
<evidence type="ECO:0000269" key="2">
    <source>
    </source>
</evidence>
<evidence type="ECO:0000269" key="3">
    <source>
    </source>
</evidence>
<evidence type="ECO:0000269" key="4">
    <source>
    </source>
</evidence>
<evidence type="ECO:0000269" key="5">
    <source>
    </source>
</evidence>
<evidence type="ECO:0000305" key="6"/>
<evidence type="ECO:0007829" key="7">
    <source>
        <dbReference type="PDB" id="1TWF"/>
    </source>
</evidence>
<evidence type="ECO:0007829" key="8">
    <source>
        <dbReference type="PDB" id="2VUM"/>
    </source>
</evidence>
<evidence type="ECO:0007829" key="9">
    <source>
        <dbReference type="PDB" id="3CQZ"/>
    </source>
</evidence>
<evidence type="ECO:0007829" key="10">
    <source>
        <dbReference type="PDB" id="3S2H"/>
    </source>
</evidence>
<dbReference type="EMBL" id="S62624">
    <property type="protein sequence ID" value="AAB27135.1"/>
    <property type="molecule type" value="Genomic_DNA"/>
</dbReference>
<dbReference type="EMBL" id="Z74747">
    <property type="protein sequence ID" value="CAA99004.1"/>
    <property type="molecule type" value="Genomic_DNA"/>
</dbReference>
<dbReference type="EMBL" id="AY557998">
    <property type="protein sequence ID" value="AAS56324.1"/>
    <property type="molecule type" value="Genomic_DNA"/>
</dbReference>
<dbReference type="EMBL" id="BK006948">
    <property type="protein sequence ID" value="DAA10778.1"/>
    <property type="molecule type" value="Genomic_DNA"/>
</dbReference>
<dbReference type="PIR" id="S58933">
    <property type="entry name" value="S58933"/>
</dbReference>
<dbReference type="RefSeq" id="NP_014638.1">
    <property type="nucleotide sequence ID" value="NM_001183259.1"/>
</dbReference>
<dbReference type="PDB" id="1I3Q">
    <property type="method" value="X-ray"/>
    <property type="resolution" value="3.10 A"/>
    <property type="chains" value="K=1-120"/>
</dbReference>
<dbReference type="PDB" id="1I50">
    <property type="method" value="X-ray"/>
    <property type="resolution" value="2.80 A"/>
    <property type="chains" value="K=1-120"/>
</dbReference>
<dbReference type="PDB" id="1I6H">
    <property type="method" value="X-ray"/>
    <property type="resolution" value="3.30 A"/>
    <property type="chains" value="K=1-120"/>
</dbReference>
<dbReference type="PDB" id="1K83">
    <property type="method" value="X-ray"/>
    <property type="resolution" value="2.80 A"/>
    <property type="chains" value="K=1-120"/>
</dbReference>
<dbReference type="PDB" id="1NIK">
    <property type="method" value="X-ray"/>
    <property type="resolution" value="4.10 A"/>
    <property type="chains" value="K=1-120"/>
</dbReference>
<dbReference type="PDB" id="1NT9">
    <property type="method" value="X-ray"/>
    <property type="resolution" value="4.20 A"/>
    <property type="chains" value="K=1-120"/>
</dbReference>
<dbReference type="PDB" id="1PQV">
    <property type="method" value="X-ray"/>
    <property type="resolution" value="3.80 A"/>
    <property type="chains" value="K=1-120"/>
</dbReference>
<dbReference type="PDB" id="1R5U">
    <property type="method" value="X-ray"/>
    <property type="resolution" value="4.50 A"/>
    <property type="chains" value="K=1-120"/>
</dbReference>
<dbReference type="PDB" id="1R9S">
    <property type="method" value="X-ray"/>
    <property type="resolution" value="4.25 A"/>
    <property type="chains" value="K=1-120"/>
</dbReference>
<dbReference type="PDB" id="1R9T">
    <property type="method" value="X-ray"/>
    <property type="resolution" value="3.50 A"/>
    <property type="chains" value="K=1-120"/>
</dbReference>
<dbReference type="PDB" id="1SFO">
    <property type="method" value="X-ray"/>
    <property type="resolution" value="3.61 A"/>
    <property type="chains" value="K=1-120"/>
</dbReference>
<dbReference type="PDB" id="1TWA">
    <property type="method" value="X-ray"/>
    <property type="resolution" value="3.20 A"/>
    <property type="chains" value="K=1-120"/>
</dbReference>
<dbReference type="PDB" id="1TWC">
    <property type="method" value="X-ray"/>
    <property type="resolution" value="3.00 A"/>
    <property type="chains" value="K=1-120"/>
</dbReference>
<dbReference type="PDB" id="1TWF">
    <property type="method" value="X-ray"/>
    <property type="resolution" value="2.30 A"/>
    <property type="chains" value="K=1-120"/>
</dbReference>
<dbReference type="PDB" id="1TWG">
    <property type="method" value="X-ray"/>
    <property type="resolution" value="3.30 A"/>
    <property type="chains" value="K=1-120"/>
</dbReference>
<dbReference type="PDB" id="1TWH">
    <property type="method" value="X-ray"/>
    <property type="resolution" value="3.40 A"/>
    <property type="chains" value="K=1-120"/>
</dbReference>
<dbReference type="PDB" id="1WCM">
    <property type="method" value="X-ray"/>
    <property type="resolution" value="3.80 A"/>
    <property type="chains" value="K=1-120"/>
</dbReference>
<dbReference type="PDB" id="1Y1V">
    <property type="method" value="X-ray"/>
    <property type="resolution" value="3.80 A"/>
    <property type="chains" value="K=1-120"/>
</dbReference>
<dbReference type="PDB" id="1Y1W">
    <property type="method" value="X-ray"/>
    <property type="resolution" value="4.00 A"/>
    <property type="chains" value="K=1-120"/>
</dbReference>
<dbReference type="PDB" id="1Y1Y">
    <property type="method" value="X-ray"/>
    <property type="resolution" value="4.00 A"/>
    <property type="chains" value="K=1-120"/>
</dbReference>
<dbReference type="PDB" id="1Y77">
    <property type="method" value="X-ray"/>
    <property type="resolution" value="4.50 A"/>
    <property type="chains" value="K=1-120"/>
</dbReference>
<dbReference type="PDB" id="2B63">
    <property type="method" value="X-ray"/>
    <property type="resolution" value="3.80 A"/>
    <property type="chains" value="K=1-120"/>
</dbReference>
<dbReference type="PDB" id="2B8K">
    <property type="method" value="X-ray"/>
    <property type="resolution" value="4.15 A"/>
    <property type="chains" value="K=1-120"/>
</dbReference>
<dbReference type="PDB" id="2E2H">
    <property type="method" value="X-ray"/>
    <property type="resolution" value="3.95 A"/>
    <property type="chains" value="K=1-120"/>
</dbReference>
<dbReference type="PDB" id="2E2I">
    <property type="method" value="X-ray"/>
    <property type="resolution" value="3.41 A"/>
    <property type="chains" value="K=1-120"/>
</dbReference>
<dbReference type="PDB" id="2E2J">
    <property type="method" value="X-ray"/>
    <property type="resolution" value="3.50 A"/>
    <property type="chains" value="K=1-120"/>
</dbReference>
<dbReference type="PDB" id="2JA5">
    <property type="method" value="X-ray"/>
    <property type="resolution" value="3.80 A"/>
    <property type="chains" value="K=1-120"/>
</dbReference>
<dbReference type="PDB" id="2JA6">
    <property type="method" value="X-ray"/>
    <property type="resolution" value="4.00 A"/>
    <property type="chains" value="K=1-120"/>
</dbReference>
<dbReference type="PDB" id="2JA7">
    <property type="method" value="X-ray"/>
    <property type="resolution" value="3.80 A"/>
    <property type="chains" value="K/W=1-120"/>
</dbReference>
<dbReference type="PDB" id="2JA8">
    <property type="method" value="X-ray"/>
    <property type="resolution" value="3.80 A"/>
    <property type="chains" value="K=1-120"/>
</dbReference>
<dbReference type="PDB" id="2NVQ">
    <property type="method" value="X-ray"/>
    <property type="resolution" value="2.90 A"/>
    <property type="chains" value="K=1-120"/>
</dbReference>
<dbReference type="PDB" id="2NVT">
    <property type="method" value="X-ray"/>
    <property type="resolution" value="3.36 A"/>
    <property type="chains" value="K=1-120"/>
</dbReference>
<dbReference type="PDB" id="2NVX">
    <property type="method" value="X-ray"/>
    <property type="resolution" value="3.60 A"/>
    <property type="chains" value="K=1-120"/>
</dbReference>
<dbReference type="PDB" id="2NVY">
    <property type="method" value="X-ray"/>
    <property type="resolution" value="3.40 A"/>
    <property type="chains" value="K=1-120"/>
</dbReference>
<dbReference type="PDB" id="2NVZ">
    <property type="method" value="X-ray"/>
    <property type="resolution" value="4.30 A"/>
    <property type="chains" value="K=1-120"/>
</dbReference>
<dbReference type="PDB" id="2R7Z">
    <property type="method" value="X-ray"/>
    <property type="resolution" value="3.80 A"/>
    <property type="chains" value="K=1-120"/>
</dbReference>
<dbReference type="PDB" id="2R92">
    <property type="method" value="X-ray"/>
    <property type="resolution" value="3.80 A"/>
    <property type="chains" value="K=1-120"/>
</dbReference>
<dbReference type="PDB" id="2R93">
    <property type="method" value="X-ray"/>
    <property type="resolution" value="4.00 A"/>
    <property type="chains" value="K=1-120"/>
</dbReference>
<dbReference type="PDB" id="2VUM">
    <property type="method" value="X-ray"/>
    <property type="resolution" value="3.40 A"/>
    <property type="chains" value="K=1-120"/>
</dbReference>
<dbReference type="PDB" id="2YU9">
    <property type="method" value="X-ray"/>
    <property type="resolution" value="3.40 A"/>
    <property type="chains" value="K=1-120"/>
</dbReference>
<dbReference type="PDB" id="3CQZ">
    <property type="method" value="X-ray"/>
    <property type="resolution" value="2.80 A"/>
    <property type="chains" value="K=1-120"/>
</dbReference>
<dbReference type="PDB" id="3FKI">
    <property type="method" value="X-ray"/>
    <property type="resolution" value="3.88 A"/>
    <property type="chains" value="K=1-120"/>
</dbReference>
<dbReference type="PDB" id="3GTG">
    <property type="method" value="X-ray"/>
    <property type="resolution" value="3.78 A"/>
    <property type="chains" value="K=1-120"/>
</dbReference>
<dbReference type="PDB" id="3GTJ">
    <property type="method" value="X-ray"/>
    <property type="resolution" value="3.42 A"/>
    <property type="chains" value="K=1-120"/>
</dbReference>
<dbReference type="PDB" id="3GTK">
    <property type="method" value="X-ray"/>
    <property type="resolution" value="3.80 A"/>
    <property type="chains" value="K=1-120"/>
</dbReference>
<dbReference type="PDB" id="3GTL">
    <property type="method" value="X-ray"/>
    <property type="resolution" value="3.38 A"/>
    <property type="chains" value="K=1-120"/>
</dbReference>
<dbReference type="PDB" id="3GTM">
    <property type="method" value="X-ray"/>
    <property type="resolution" value="3.80 A"/>
    <property type="chains" value="K=1-120"/>
</dbReference>
<dbReference type="PDB" id="3GTO">
    <property type="method" value="X-ray"/>
    <property type="resolution" value="4.00 A"/>
    <property type="chains" value="K=1-120"/>
</dbReference>
<dbReference type="PDB" id="3GTP">
    <property type="method" value="X-ray"/>
    <property type="resolution" value="3.90 A"/>
    <property type="chains" value="K=1-120"/>
</dbReference>
<dbReference type="PDB" id="3GTQ">
    <property type="method" value="X-ray"/>
    <property type="resolution" value="3.80 A"/>
    <property type="chains" value="K=1-120"/>
</dbReference>
<dbReference type="PDB" id="3H3V">
    <property type="method" value="X-ray"/>
    <property type="resolution" value="4.00 A"/>
    <property type="chains" value="L=1-120"/>
</dbReference>
<dbReference type="PDB" id="3HOU">
    <property type="method" value="X-ray"/>
    <property type="resolution" value="3.20 A"/>
    <property type="chains" value="K/W=1-120"/>
</dbReference>
<dbReference type="PDB" id="3HOV">
    <property type="method" value="X-ray"/>
    <property type="resolution" value="3.50 A"/>
    <property type="chains" value="K=1-120"/>
</dbReference>
<dbReference type="PDB" id="3HOW">
    <property type="method" value="X-ray"/>
    <property type="resolution" value="3.60 A"/>
    <property type="chains" value="K=1-120"/>
</dbReference>
<dbReference type="PDB" id="3HOX">
    <property type="method" value="X-ray"/>
    <property type="resolution" value="3.65 A"/>
    <property type="chains" value="K=1-120"/>
</dbReference>
<dbReference type="PDB" id="3HOY">
    <property type="method" value="X-ray"/>
    <property type="resolution" value="3.40 A"/>
    <property type="chains" value="K=1-120"/>
</dbReference>
<dbReference type="PDB" id="3HOZ">
    <property type="method" value="X-ray"/>
    <property type="resolution" value="3.65 A"/>
    <property type="chains" value="K=1-120"/>
</dbReference>
<dbReference type="PDB" id="3I4M">
    <property type="method" value="X-ray"/>
    <property type="resolution" value="3.70 A"/>
    <property type="chains" value="K=1-120"/>
</dbReference>
<dbReference type="PDB" id="3I4N">
    <property type="method" value="X-ray"/>
    <property type="resolution" value="3.90 A"/>
    <property type="chains" value="K=1-120"/>
</dbReference>
<dbReference type="PDB" id="3J0K">
    <property type="method" value="EM"/>
    <property type="resolution" value="36.00 A"/>
    <property type="chains" value="K=1-120"/>
</dbReference>
<dbReference type="PDB" id="3J1N">
    <property type="method" value="EM"/>
    <property type="resolution" value="16.00 A"/>
    <property type="chains" value="K=1-120"/>
</dbReference>
<dbReference type="PDB" id="3K1F">
    <property type="method" value="X-ray"/>
    <property type="resolution" value="4.30 A"/>
    <property type="chains" value="K=1-120"/>
</dbReference>
<dbReference type="PDB" id="3K7A">
    <property type="method" value="X-ray"/>
    <property type="resolution" value="3.80 A"/>
    <property type="chains" value="K=1-120"/>
</dbReference>
<dbReference type="PDB" id="3M3Y">
    <property type="method" value="X-ray"/>
    <property type="resolution" value="3.18 A"/>
    <property type="chains" value="K=1-120"/>
</dbReference>
<dbReference type="PDB" id="3M4O">
    <property type="method" value="X-ray"/>
    <property type="resolution" value="3.57 A"/>
    <property type="chains" value="K=1-120"/>
</dbReference>
<dbReference type="PDB" id="3PO2">
    <property type="method" value="X-ray"/>
    <property type="resolution" value="3.30 A"/>
    <property type="chains" value="K=1-120"/>
</dbReference>
<dbReference type="PDB" id="3PO3">
    <property type="method" value="X-ray"/>
    <property type="resolution" value="3.30 A"/>
    <property type="chains" value="K=1-120"/>
</dbReference>
<dbReference type="PDB" id="3QT1">
    <property type="method" value="X-ray"/>
    <property type="resolution" value="4.30 A"/>
    <property type="chains" value="K=1-120"/>
</dbReference>
<dbReference type="PDB" id="3RZD">
    <property type="method" value="X-ray"/>
    <property type="resolution" value="3.30 A"/>
    <property type="chains" value="K=1-120"/>
</dbReference>
<dbReference type="PDB" id="3RZO">
    <property type="method" value="X-ray"/>
    <property type="resolution" value="3.00 A"/>
    <property type="chains" value="K=1-120"/>
</dbReference>
<dbReference type="PDB" id="3S14">
    <property type="method" value="X-ray"/>
    <property type="resolution" value="2.85 A"/>
    <property type="chains" value="K=1-120"/>
</dbReference>
<dbReference type="PDB" id="3S15">
    <property type="method" value="X-ray"/>
    <property type="resolution" value="3.30 A"/>
    <property type="chains" value="K=1-120"/>
</dbReference>
<dbReference type="PDB" id="3S16">
    <property type="method" value="X-ray"/>
    <property type="resolution" value="3.24 A"/>
    <property type="chains" value="K=1-120"/>
</dbReference>
<dbReference type="PDB" id="3S17">
    <property type="method" value="X-ray"/>
    <property type="resolution" value="3.20 A"/>
    <property type="chains" value="K=1-120"/>
</dbReference>
<dbReference type="PDB" id="3S1M">
    <property type="method" value="X-ray"/>
    <property type="resolution" value="3.13 A"/>
    <property type="chains" value="K=1-120"/>
</dbReference>
<dbReference type="PDB" id="3S1N">
    <property type="method" value="X-ray"/>
    <property type="resolution" value="3.10 A"/>
    <property type="chains" value="K=1-120"/>
</dbReference>
<dbReference type="PDB" id="3S1Q">
    <property type="method" value="X-ray"/>
    <property type="resolution" value="3.30 A"/>
    <property type="chains" value="K=1-120"/>
</dbReference>
<dbReference type="PDB" id="3S1R">
    <property type="method" value="X-ray"/>
    <property type="resolution" value="3.20 A"/>
    <property type="chains" value="K=1-120"/>
</dbReference>
<dbReference type="PDB" id="3S2D">
    <property type="method" value="X-ray"/>
    <property type="resolution" value="3.20 A"/>
    <property type="chains" value="K=1-120"/>
</dbReference>
<dbReference type="PDB" id="3S2H">
    <property type="method" value="X-ray"/>
    <property type="resolution" value="3.30 A"/>
    <property type="chains" value="K=1-120"/>
</dbReference>
<dbReference type="PDB" id="4A3B">
    <property type="method" value="X-ray"/>
    <property type="resolution" value="3.50 A"/>
    <property type="chains" value="K=1-120"/>
</dbReference>
<dbReference type="PDB" id="4A3C">
    <property type="method" value="X-ray"/>
    <property type="resolution" value="3.50 A"/>
    <property type="chains" value="K=1-120"/>
</dbReference>
<dbReference type="PDB" id="4A3D">
    <property type="method" value="X-ray"/>
    <property type="resolution" value="3.40 A"/>
    <property type="chains" value="K=1-120"/>
</dbReference>
<dbReference type="PDB" id="4A3E">
    <property type="method" value="X-ray"/>
    <property type="resolution" value="3.40 A"/>
    <property type="chains" value="K=1-120"/>
</dbReference>
<dbReference type="PDB" id="4A3F">
    <property type="method" value="X-ray"/>
    <property type="resolution" value="3.50 A"/>
    <property type="chains" value="K=1-120"/>
</dbReference>
<dbReference type="PDB" id="4A3G">
    <property type="method" value="X-ray"/>
    <property type="resolution" value="3.50 A"/>
    <property type="chains" value="K=1-120"/>
</dbReference>
<dbReference type="PDB" id="4A3I">
    <property type="method" value="X-ray"/>
    <property type="resolution" value="3.80 A"/>
    <property type="chains" value="K=1-120"/>
</dbReference>
<dbReference type="PDB" id="4A3J">
    <property type="method" value="X-ray"/>
    <property type="resolution" value="3.70 A"/>
    <property type="chains" value="K=1-120"/>
</dbReference>
<dbReference type="PDB" id="4A3K">
    <property type="method" value="X-ray"/>
    <property type="resolution" value="3.50 A"/>
    <property type="chains" value="K=1-120"/>
</dbReference>
<dbReference type="PDB" id="4A3L">
    <property type="method" value="X-ray"/>
    <property type="resolution" value="3.50 A"/>
    <property type="chains" value="K=1-120"/>
</dbReference>
<dbReference type="PDB" id="4A3M">
    <property type="method" value="X-ray"/>
    <property type="resolution" value="3.90 A"/>
    <property type="chains" value="K=1-120"/>
</dbReference>
<dbReference type="PDB" id="4A93">
    <property type="method" value="X-ray"/>
    <property type="resolution" value="3.40 A"/>
    <property type="chains" value="K=1-120"/>
</dbReference>
<dbReference type="PDB" id="4BBR">
    <property type="method" value="X-ray"/>
    <property type="resolution" value="3.40 A"/>
    <property type="chains" value="K=1-120"/>
</dbReference>
<dbReference type="PDB" id="4BBS">
    <property type="method" value="X-ray"/>
    <property type="resolution" value="3.60 A"/>
    <property type="chains" value="K=1-120"/>
</dbReference>
<dbReference type="PDB" id="4BXX">
    <property type="method" value="X-ray"/>
    <property type="resolution" value="3.28 A"/>
    <property type="chains" value="K=1-120"/>
</dbReference>
<dbReference type="PDB" id="4BXZ">
    <property type="method" value="X-ray"/>
    <property type="resolution" value="4.80 A"/>
    <property type="chains" value="K=1-120"/>
</dbReference>
<dbReference type="PDB" id="4BY1">
    <property type="method" value="X-ray"/>
    <property type="resolution" value="3.60 A"/>
    <property type="chains" value="K=1-120"/>
</dbReference>
<dbReference type="PDB" id="4BY7">
    <property type="method" value="X-ray"/>
    <property type="resolution" value="3.15 A"/>
    <property type="chains" value="K=1-120"/>
</dbReference>
<dbReference type="PDB" id="4V1M">
    <property type="method" value="EM"/>
    <property type="resolution" value="6.60 A"/>
    <property type="chains" value="K=1-120"/>
</dbReference>
<dbReference type="PDB" id="4V1N">
    <property type="method" value="EM"/>
    <property type="resolution" value="7.80 A"/>
    <property type="chains" value="K=1-120"/>
</dbReference>
<dbReference type="PDB" id="4V1O">
    <property type="method" value="EM"/>
    <property type="resolution" value="9.70 A"/>
    <property type="chains" value="K=1-120"/>
</dbReference>
<dbReference type="PDB" id="4X67">
    <property type="method" value="X-ray"/>
    <property type="resolution" value="4.10 A"/>
    <property type="chains" value="K=1-120"/>
</dbReference>
<dbReference type="PDB" id="4X6A">
    <property type="method" value="X-ray"/>
    <property type="resolution" value="3.96 A"/>
    <property type="chains" value="K=1-120"/>
</dbReference>
<dbReference type="PDB" id="4Y52">
    <property type="method" value="X-ray"/>
    <property type="resolution" value="3.50 A"/>
    <property type="chains" value="K=1-120"/>
</dbReference>
<dbReference type="PDB" id="4Y7N">
    <property type="method" value="X-ray"/>
    <property type="resolution" value="3.30 A"/>
    <property type="chains" value="K=1-120"/>
</dbReference>
<dbReference type="PDB" id="5C3E">
    <property type="method" value="X-ray"/>
    <property type="resolution" value="3.70 A"/>
    <property type="chains" value="K=1-120"/>
</dbReference>
<dbReference type="PDB" id="5C44">
    <property type="method" value="X-ray"/>
    <property type="resolution" value="3.95 A"/>
    <property type="chains" value="K=1-120"/>
</dbReference>
<dbReference type="PDB" id="5C4A">
    <property type="method" value="X-ray"/>
    <property type="resolution" value="4.20 A"/>
    <property type="chains" value="K=1-120"/>
</dbReference>
<dbReference type="PDB" id="5C4J">
    <property type="method" value="X-ray"/>
    <property type="resolution" value="4.00 A"/>
    <property type="chains" value="K=1-120"/>
</dbReference>
<dbReference type="PDB" id="5C4X">
    <property type="method" value="X-ray"/>
    <property type="resolution" value="4.00 A"/>
    <property type="chains" value="K=1-120"/>
</dbReference>
<dbReference type="PDB" id="5FMF">
    <property type="method" value="EM"/>
    <property type="resolution" value="6.00 A"/>
    <property type="chains" value="K=1-115"/>
</dbReference>
<dbReference type="PDB" id="5FYW">
    <property type="method" value="EM"/>
    <property type="resolution" value="4.35 A"/>
    <property type="chains" value="K=1-120"/>
</dbReference>
<dbReference type="PDB" id="5FZ5">
    <property type="method" value="EM"/>
    <property type="resolution" value="8.80 A"/>
    <property type="chains" value="K=1-120"/>
</dbReference>
<dbReference type="PDB" id="5IP7">
    <property type="method" value="X-ray"/>
    <property type="resolution" value="3.52 A"/>
    <property type="chains" value="K=1-115"/>
</dbReference>
<dbReference type="PDB" id="5IP9">
    <property type="method" value="X-ray"/>
    <property type="resolution" value="3.90 A"/>
    <property type="chains" value="K=1-115"/>
</dbReference>
<dbReference type="PDB" id="5OQJ">
    <property type="method" value="EM"/>
    <property type="resolution" value="4.70 A"/>
    <property type="chains" value="K=1-120"/>
</dbReference>
<dbReference type="PDB" id="5OQM">
    <property type="method" value="EM"/>
    <property type="resolution" value="5.80 A"/>
    <property type="chains" value="K=1-120"/>
</dbReference>
<dbReference type="PDB" id="5OT2">
    <property type="method" value="X-ray"/>
    <property type="resolution" value="3.20 A"/>
    <property type="chains" value="K=1-120"/>
</dbReference>
<dbReference type="PDB" id="5SVA">
    <property type="method" value="EM"/>
    <property type="resolution" value="15.30 A"/>
    <property type="chains" value="K=1-120"/>
</dbReference>
<dbReference type="PDB" id="5U5Q">
    <property type="method" value="X-ray"/>
    <property type="resolution" value="3.80 A"/>
    <property type="chains" value="K=1-120"/>
</dbReference>
<dbReference type="PDB" id="5VVR">
    <property type="method" value="EM"/>
    <property type="resolution" value="5.80 A"/>
    <property type="chains" value="K=1-120"/>
</dbReference>
<dbReference type="PDB" id="5VVS">
    <property type="method" value="EM"/>
    <property type="resolution" value="6.40 A"/>
    <property type="chains" value="K=1-120"/>
</dbReference>
<dbReference type="PDB" id="5W4U">
    <property type="method" value="X-ray"/>
    <property type="resolution" value="3.60 A"/>
    <property type="chains" value="K=1-120"/>
</dbReference>
<dbReference type="PDB" id="5W51">
    <property type="method" value="X-ray"/>
    <property type="resolution" value="3.40 A"/>
    <property type="chains" value="K=1-120"/>
</dbReference>
<dbReference type="PDB" id="6BLO">
    <property type="method" value="X-ray"/>
    <property type="resolution" value="3.40 A"/>
    <property type="chains" value="K=1-120"/>
</dbReference>
<dbReference type="PDB" id="6BLP">
    <property type="method" value="X-ray"/>
    <property type="resolution" value="3.20 A"/>
    <property type="chains" value="K=1-120"/>
</dbReference>
<dbReference type="PDB" id="6BM2">
    <property type="method" value="X-ray"/>
    <property type="resolution" value="3.40 A"/>
    <property type="chains" value="K=1-120"/>
</dbReference>
<dbReference type="PDB" id="6BM4">
    <property type="method" value="X-ray"/>
    <property type="resolution" value="2.95 A"/>
    <property type="chains" value="K=1-120"/>
</dbReference>
<dbReference type="PDB" id="6BQF">
    <property type="method" value="X-ray"/>
    <property type="resolution" value="3.35 A"/>
    <property type="chains" value="K=1-120"/>
</dbReference>
<dbReference type="PDB" id="6GYK">
    <property type="method" value="EM"/>
    <property type="resolution" value="5.10 A"/>
    <property type="chains" value="K=1-120"/>
</dbReference>
<dbReference type="PDB" id="6GYL">
    <property type="method" value="EM"/>
    <property type="resolution" value="4.80 A"/>
    <property type="chains" value="K=1-120"/>
</dbReference>
<dbReference type="PDB" id="6GYM">
    <property type="method" value="EM"/>
    <property type="resolution" value="6.70 A"/>
    <property type="chains" value="K=1-120"/>
</dbReference>
<dbReference type="PDB" id="6I84">
    <property type="method" value="EM"/>
    <property type="resolution" value="4.40 A"/>
    <property type="chains" value="K=1-120"/>
</dbReference>
<dbReference type="PDB" id="6O6C">
    <property type="method" value="EM"/>
    <property type="resolution" value="3.10 A"/>
    <property type="chains" value="I=1-120"/>
</dbReference>
<dbReference type="PDB" id="6UPX">
    <property type="method" value="X-ray"/>
    <property type="resolution" value="3.40 A"/>
    <property type="chains" value="K=1-120"/>
</dbReference>
<dbReference type="PDB" id="6UPY">
    <property type="method" value="X-ray"/>
    <property type="resolution" value="3.40 A"/>
    <property type="chains" value="K=1-120"/>
</dbReference>
<dbReference type="PDB" id="6UPZ">
    <property type="method" value="X-ray"/>
    <property type="resolution" value="3.10 A"/>
    <property type="chains" value="K=1-120"/>
</dbReference>
<dbReference type="PDB" id="6UQ0">
    <property type="method" value="X-ray"/>
    <property type="resolution" value="3.56 A"/>
    <property type="chains" value="K=1-120"/>
</dbReference>
<dbReference type="PDB" id="6UQ1">
    <property type="method" value="X-ray"/>
    <property type="resolution" value="3.60 A"/>
    <property type="chains" value="K=1-120"/>
</dbReference>
<dbReference type="PDB" id="6UQ2">
    <property type="method" value="X-ray"/>
    <property type="resolution" value="3.20 A"/>
    <property type="chains" value="K=1-120"/>
</dbReference>
<dbReference type="PDB" id="6UQ3">
    <property type="method" value="X-ray"/>
    <property type="resolution" value="3.47 A"/>
    <property type="chains" value="K=1-120"/>
</dbReference>
<dbReference type="PDB" id="7KED">
    <property type="method" value="X-ray"/>
    <property type="resolution" value="3.60 A"/>
    <property type="chains" value="K=1-120"/>
</dbReference>
<dbReference type="PDB" id="7KEE">
    <property type="method" value="X-ray"/>
    <property type="resolution" value="3.45 A"/>
    <property type="chains" value="K=1-120"/>
</dbReference>
<dbReference type="PDB" id="7KEF">
    <property type="method" value="X-ray"/>
    <property type="resolution" value="3.89 A"/>
    <property type="chains" value="K=1-120"/>
</dbReference>
<dbReference type="PDB" id="7MEI">
    <property type="method" value="EM"/>
    <property type="resolution" value="3.54 A"/>
    <property type="chains" value="K/k=1-120"/>
</dbReference>
<dbReference type="PDB" id="7MK9">
    <property type="method" value="EM"/>
    <property type="resolution" value="3.54 A"/>
    <property type="chains" value="K=1-120"/>
</dbReference>
<dbReference type="PDB" id="7MKA">
    <property type="method" value="EM"/>
    <property type="resolution" value="3.54 A"/>
    <property type="chains" value="k=1-120"/>
</dbReference>
<dbReference type="PDB" id="7ML0">
    <property type="method" value="EM"/>
    <property type="resolution" value="3.00 A"/>
    <property type="chains" value="K=1-120"/>
</dbReference>
<dbReference type="PDB" id="7ML1">
    <property type="method" value="EM"/>
    <property type="resolution" value="4.00 A"/>
    <property type="chains" value="K=1-120"/>
</dbReference>
<dbReference type="PDB" id="7ML2">
    <property type="method" value="EM"/>
    <property type="resolution" value="3.40 A"/>
    <property type="chains" value="K=1-120"/>
</dbReference>
<dbReference type="PDB" id="7ML4">
    <property type="method" value="EM"/>
    <property type="resolution" value="3.10 A"/>
    <property type="chains" value="K=1-120"/>
</dbReference>
<dbReference type="PDB" id="7NKX">
    <property type="method" value="EM"/>
    <property type="resolution" value="2.90 A"/>
    <property type="chains" value="K=1-120"/>
</dbReference>
<dbReference type="PDB" id="7NKY">
    <property type="method" value="EM"/>
    <property type="resolution" value="3.20 A"/>
    <property type="chains" value="K=1-120"/>
</dbReference>
<dbReference type="PDB" id="7O4I">
    <property type="method" value="EM"/>
    <property type="resolution" value="3.20 A"/>
    <property type="chains" value="K=1-120"/>
</dbReference>
<dbReference type="PDB" id="7O4J">
    <property type="method" value="EM"/>
    <property type="resolution" value="2.90 A"/>
    <property type="chains" value="K=1-120"/>
</dbReference>
<dbReference type="PDB" id="7O72">
    <property type="method" value="EM"/>
    <property type="resolution" value="3.40 A"/>
    <property type="chains" value="K=1-120"/>
</dbReference>
<dbReference type="PDB" id="7O73">
    <property type="method" value="EM"/>
    <property type="resolution" value="3.40 A"/>
    <property type="chains" value="K=1-120"/>
</dbReference>
<dbReference type="PDB" id="7O75">
    <property type="method" value="EM"/>
    <property type="resolution" value="3.20 A"/>
    <property type="chains" value="K=1-120"/>
</dbReference>
<dbReference type="PDB" id="7RIM">
    <property type="method" value="X-ray"/>
    <property type="resolution" value="2.90 A"/>
    <property type="chains" value="K=1-120"/>
</dbReference>
<dbReference type="PDB" id="7RIP">
    <property type="method" value="X-ray"/>
    <property type="resolution" value="3.30 A"/>
    <property type="chains" value="K=1-120"/>
</dbReference>
<dbReference type="PDB" id="7RIQ">
    <property type="method" value="X-ray"/>
    <property type="resolution" value="3.00 A"/>
    <property type="chains" value="K=1-120"/>
</dbReference>
<dbReference type="PDB" id="7RIW">
    <property type="method" value="X-ray"/>
    <property type="resolution" value="3.20 A"/>
    <property type="chains" value="K=1-120"/>
</dbReference>
<dbReference type="PDB" id="7RIX">
    <property type="method" value="X-ray"/>
    <property type="resolution" value="3.40 A"/>
    <property type="chains" value="K=1-120"/>
</dbReference>
<dbReference type="PDB" id="7RIY">
    <property type="method" value="X-ray"/>
    <property type="resolution" value="3.70 A"/>
    <property type="chains" value="K=1-120"/>
</dbReference>
<dbReference type="PDB" id="7UI9">
    <property type="method" value="EM"/>
    <property type="resolution" value="3.30 A"/>
    <property type="chains" value="K=1-120"/>
</dbReference>
<dbReference type="PDB" id="7UIF">
    <property type="method" value="EM"/>
    <property type="resolution" value="4.60 A"/>
    <property type="chains" value="K=1-120"/>
</dbReference>
<dbReference type="PDB" id="7UIO">
    <property type="method" value="EM"/>
    <property type="resolution" value="3.30 A"/>
    <property type="chains" value="AK/BK=1-120"/>
</dbReference>
<dbReference type="PDB" id="7ZS9">
    <property type="method" value="EM"/>
    <property type="resolution" value="3.10 A"/>
    <property type="chains" value="K=1-120"/>
</dbReference>
<dbReference type="PDB" id="7ZSA">
    <property type="method" value="EM"/>
    <property type="resolution" value="4.00 A"/>
    <property type="chains" value="K=1-120"/>
</dbReference>
<dbReference type="PDB" id="7ZSB">
    <property type="method" value="EM"/>
    <property type="resolution" value="6.60 A"/>
    <property type="chains" value="K=1-120"/>
</dbReference>
<dbReference type="PDB" id="8CEN">
    <property type="method" value="EM"/>
    <property type="resolution" value="3.00 A"/>
    <property type="chains" value="K=1-120"/>
</dbReference>
<dbReference type="PDB" id="8CEO">
    <property type="method" value="EM"/>
    <property type="resolution" value="3.60 A"/>
    <property type="chains" value="K=1-120"/>
</dbReference>
<dbReference type="PDB" id="8JCH">
    <property type="method" value="EM"/>
    <property type="resolution" value="2.70 A"/>
    <property type="chains" value="K=1-120"/>
</dbReference>
<dbReference type="PDB" id="8K5P">
    <property type="method" value="EM"/>
    <property type="resolution" value="2.80 A"/>
    <property type="chains" value="K=1-120"/>
</dbReference>
<dbReference type="PDB" id="8RAM">
    <property type="method" value="EM"/>
    <property type="resolution" value="2.80 A"/>
    <property type="chains" value="K=1-120"/>
</dbReference>
<dbReference type="PDB" id="8RAP">
    <property type="method" value="EM"/>
    <property type="resolution" value="4.30 A"/>
    <property type="chains" value="K=1-120"/>
</dbReference>
<dbReference type="PDB" id="8TUG">
    <property type="method" value="EM"/>
    <property type="resolution" value="3.50 A"/>
    <property type="chains" value="K=1-120"/>
</dbReference>
<dbReference type="PDB" id="8TVP">
    <property type="method" value="EM"/>
    <property type="resolution" value="3.70 A"/>
    <property type="chains" value="K=1-120"/>
</dbReference>
<dbReference type="PDB" id="8TVQ">
    <property type="method" value="EM"/>
    <property type="resolution" value="4.60 A"/>
    <property type="chains" value="K=1-120"/>
</dbReference>
<dbReference type="PDB" id="8TVS">
    <property type="method" value="EM"/>
    <property type="resolution" value="4.40 A"/>
    <property type="chains" value="K=1-120"/>
</dbReference>
<dbReference type="PDB" id="8TVV">
    <property type="method" value="EM"/>
    <property type="resolution" value="3.70 A"/>
    <property type="chains" value="K=1-120"/>
</dbReference>
<dbReference type="PDB" id="8TVW">
    <property type="method" value="EM"/>
    <property type="resolution" value="3.60 A"/>
    <property type="chains" value="K=1-120"/>
</dbReference>
<dbReference type="PDB" id="8TVX">
    <property type="method" value="EM"/>
    <property type="resolution" value="3.70 A"/>
    <property type="chains" value="K=1-120"/>
</dbReference>
<dbReference type="PDB" id="8TVY">
    <property type="method" value="EM"/>
    <property type="resolution" value="3.10 A"/>
    <property type="chains" value="K=1-120"/>
</dbReference>
<dbReference type="PDB" id="8UKQ">
    <property type="method" value="X-ray"/>
    <property type="resolution" value="3.50 A"/>
    <property type="chains" value="K=1-120"/>
</dbReference>
<dbReference type="PDB" id="8UKR">
    <property type="method" value="X-ray"/>
    <property type="resolution" value="3.78 A"/>
    <property type="chains" value="K=1-120"/>
</dbReference>
<dbReference type="PDB" id="8UKS">
    <property type="method" value="X-ray"/>
    <property type="resolution" value="3.40 A"/>
    <property type="chains" value="K=1-120"/>
</dbReference>
<dbReference type="PDB" id="8UKT">
    <property type="method" value="X-ray"/>
    <property type="resolution" value="3.60 A"/>
    <property type="chains" value="K=1-120"/>
</dbReference>
<dbReference type="PDB" id="8UKU">
    <property type="method" value="X-ray"/>
    <property type="resolution" value="3.60 A"/>
    <property type="chains" value="K=1-120"/>
</dbReference>
<dbReference type="PDB" id="8UMH">
    <property type="method" value="EM"/>
    <property type="resolution" value="4.10 A"/>
    <property type="chains" value="K=1-120"/>
</dbReference>
<dbReference type="PDB" id="8UMI">
    <property type="method" value="EM"/>
    <property type="resolution" value="3.70 A"/>
    <property type="chains" value="K=1-120"/>
</dbReference>
<dbReference type="PDB" id="8UOQ">
    <property type="method" value="EM"/>
    <property type="resolution" value="3.80 A"/>
    <property type="chains" value="K=1-120"/>
</dbReference>
<dbReference type="PDB" id="8UOT">
    <property type="method" value="EM"/>
    <property type="resolution" value="3.70 A"/>
    <property type="chains" value="K=1-120"/>
</dbReference>
<dbReference type="PDB" id="9BVT">
    <property type="method" value="X-ray"/>
    <property type="resolution" value="3.40 A"/>
    <property type="chains" value="K=1-120"/>
</dbReference>
<dbReference type="PDB" id="9BW0">
    <property type="method" value="X-ray"/>
    <property type="resolution" value="3.51 A"/>
    <property type="chains" value="K=1-120"/>
</dbReference>
<dbReference type="PDB" id="9JA1">
    <property type="method" value="EM"/>
    <property type="resolution" value="2.98 A"/>
    <property type="chains" value="K=1-120"/>
</dbReference>
<dbReference type="PDBsum" id="1I3Q"/>
<dbReference type="PDBsum" id="1I50"/>
<dbReference type="PDBsum" id="1I6H"/>
<dbReference type="PDBsum" id="1K83"/>
<dbReference type="PDBsum" id="1NIK"/>
<dbReference type="PDBsum" id="1NT9"/>
<dbReference type="PDBsum" id="1PQV"/>
<dbReference type="PDBsum" id="1R5U"/>
<dbReference type="PDBsum" id="1R9S"/>
<dbReference type="PDBsum" id="1R9T"/>
<dbReference type="PDBsum" id="1SFO"/>
<dbReference type="PDBsum" id="1TWA"/>
<dbReference type="PDBsum" id="1TWC"/>
<dbReference type="PDBsum" id="1TWF"/>
<dbReference type="PDBsum" id="1TWG"/>
<dbReference type="PDBsum" id="1TWH"/>
<dbReference type="PDBsum" id="1WCM"/>
<dbReference type="PDBsum" id="1Y1V"/>
<dbReference type="PDBsum" id="1Y1W"/>
<dbReference type="PDBsum" id="1Y1Y"/>
<dbReference type="PDBsum" id="1Y77"/>
<dbReference type="PDBsum" id="2B63"/>
<dbReference type="PDBsum" id="2B8K"/>
<dbReference type="PDBsum" id="2E2H"/>
<dbReference type="PDBsum" id="2E2I"/>
<dbReference type="PDBsum" id="2E2J"/>
<dbReference type="PDBsum" id="2JA5"/>
<dbReference type="PDBsum" id="2JA6"/>
<dbReference type="PDBsum" id="2JA7"/>
<dbReference type="PDBsum" id="2JA8"/>
<dbReference type="PDBsum" id="2NVQ"/>
<dbReference type="PDBsum" id="2NVT"/>
<dbReference type="PDBsum" id="2NVX"/>
<dbReference type="PDBsum" id="2NVY"/>
<dbReference type="PDBsum" id="2NVZ"/>
<dbReference type="PDBsum" id="2R7Z"/>
<dbReference type="PDBsum" id="2R92"/>
<dbReference type="PDBsum" id="2R93"/>
<dbReference type="PDBsum" id="2VUM"/>
<dbReference type="PDBsum" id="2YU9"/>
<dbReference type="PDBsum" id="3CQZ"/>
<dbReference type="PDBsum" id="3FKI"/>
<dbReference type="PDBsum" id="3GTG"/>
<dbReference type="PDBsum" id="3GTJ"/>
<dbReference type="PDBsum" id="3GTK"/>
<dbReference type="PDBsum" id="3GTL"/>
<dbReference type="PDBsum" id="3GTM"/>
<dbReference type="PDBsum" id="3GTO"/>
<dbReference type="PDBsum" id="3GTP"/>
<dbReference type="PDBsum" id="3GTQ"/>
<dbReference type="PDBsum" id="3H3V"/>
<dbReference type="PDBsum" id="3HOU"/>
<dbReference type="PDBsum" id="3HOV"/>
<dbReference type="PDBsum" id="3HOW"/>
<dbReference type="PDBsum" id="3HOX"/>
<dbReference type="PDBsum" id="3HOY"/>
<dbReference type="PDBsum" id="3HOZ"/>
<dbReference type="PDBsum" id="3I4M"/>
<dbReference type="PDBsum" id="3I4N"/>
<dbReference type="PDBsum" id="3J0K"/>
<dbReference type="PDBsum" id="3J1N"/>
<dbReference type="PDBsum" id="3K1F"/>
<dbReference type="PDBsum" id="3K7A"/>
<dbReference type="PDBsum" id="3M3Y"/>
<dbReference type="PDBsum" id="3M4O"/>
<dbReference type="PDBsum" id="3PO2"/>
<dbReference type="PDBsum" id="3PO3"/>
<dbReference type="PDBsum" id="3QT1"/>
<dbReference type="PDBsum" id="3RZD"/>
<dbReference type="PDBsum" id="3RZO"/>
<dbReference type="PDBsum" id="3S14"/>
<dbReference type="PDBsum" id="3S15"/>
<dbReference type="PDBsum" id="3S16"/>
<dbReference type="PDBsum" id="3S17"/>
<dbReference type="PDBsum" id="3S1M"/>
<dbReference type="PDBsum" id="3S1N"/>
<dbReference type="PDBsum" id="3S1Q"/>
<dbReference type="PDBsum" id="3S1R"/>
<dbReference type="PDBsum" id="3S2D"/>
<dbReference type="PDBsum" id="3S2H"/>
<dbReference type="PDBsum" id="4A3B"/>
<dbReference type="PDBsum" id="4A3C"/>
<dbReference type="PDBsum" id="4A3D"/>
<dbReference type="PDBsum" id="4A3E"/>
<dbReference type="PDBsum" id="4A3F"/>
<dbReference type="PDBsum" id="4A3G"/>
<dbReference type="PDBsum" id="4A3I"/>
<dbReference type="PDBsum" id="4A3J"/>
<dbReference type="PDBsum" id="4A3K"/>
<dbReference type="PDBsum" id="4A3L"/>
<dbReference type="PDBsum" id="4A3M"/>
<dbReference type="PDBsum" id="4A93"/>
<dbReference type="PDBsum" id="4BBR"/>
<dbReference type="PDBsum" id="4BBS"/>
<dbReference type="PDBsum" id="4BXX"/>
<dbReference type="PDBsum" id="4BXZ"/>
<dbReference type="PDBsum" id="4BY1"/>
<dbReference type="PDBsum" id="4BY7"/>
<dbReference type="PDBsum" id="4V1M"/>
<dbReference type="PDBsum" id="4V1N"/>
<dbReference type="PDBsum" id="4V1O"/>
<dbReference type="PDBsum" id="4X67"/>
<dbReference type="PDBsum" id="4X6A"/>
<dbReference type="PDBsum" id="4Y52"/>
<dbReference type="PDBsum" id="4Y7N"/>
<dbReference type="PDBsum" id="5C3E"/>
<dbReference type="PDBsum" id="5C44"/>
<dbReference type="PDBsum" id="5C4A"/>
<dbReference type="PDBsum" id="5C4J"/>
<dbReference type="PDBsum" id="5C4X"/>
<dbReference type="PDBsum" id="5FMF"/>
<dbReference type="PDBsum" id="5FYW"/>
<dbReference type="PDBsum" id="5FZ5"/>
<dbReference type="PDBsum" id="5IP7"/>
<dbReference type="PDBsum" id="5IP9"/>
<dbReference type="PDBsum" id="5OQJ"/>
<dbReference type="PDBsum" id="5OQM"/>
<dbReference type="PDBsum" id="5OT2"/>
<dbReference type="PDBsum" id="5SVA"/>
<dbReference type="PDBsum" id="5U5Q"/>
<dbReference type="PDBsum" id="5VVR"/>
<dbReference type="PDBsum" id="5VVS"/>
<dbReference type="PDBsum" id="5W4U"/>
<dbReference type="PDBsum" id="5W51"/>
<dbReference type="PDBsum" id="6BLO"/>
<dbReference type="PDBsum" id="6BLP"/>
<dbReference type="PDBsum" id="6BM2"/>
<dbReference type="PDBsum" id="6BM4"/>
<dbReference type="PDBsum" id="6BQF"/>
<dbReference type="PDBsum" id="6GYK"/>
<dbReference type="PDBsum" id="6GYL"/>
<dbReference type="PDBsum" id="6GYM"/>
<dbReference type="PDBsum" id="6I84"/>
<dbReference type="PDBsum" id="6O6C"/>
<dbReference type="PDBsum" id="6UPX"/>
<dbReference type="PDBsum" id="6UPY"/>
<dbReference type="PDBsum" id="6UPZ"/>
<dbReference type="PDBsum" id="6UQ0"/>
<dbReference type="PDBsum" id="6UQ1"/>
<dbReference type="PDBsum" id="6UQ2"/>
<dbReference type="PDBsum" id="6UQ3"/>
<dbReference type="PDBsum" id="7KED"/>
<dbReference type="PDBsum" id="7KEE"/>
<dbReference type="PDBsum" id="7KEF"/>
<dbReference type="PDBsum" id="7MEI"/>
<dbReference type="PDBsum" id="7MK9"/>
<dbReference type="PDBsum" id="7MKA"/>
<dbReference type="PDBsum" id="7ML0"/>
<dbReference type="PDBsum" id="7ML1"/>
<dbReference type="PDBsum" id="7ML2"/>
<dbReference type="PDBsum" id="7ML4"/>
<dbReference type="PDBsum" id="7NKX"/>
<dbReference type="PDBsum" id="7NKY"/>
<dbReference type="PDBsum" id="7O4I"/>
<dbReference type="PDBsum" id="7O4J"/>
<dbReference type="PDBsum" id="7O72"/>
<dbReference type="PDBsum" id="7O73"/>
<dbReference type="PDBsum" id="7O75"/>
<dbReference type="PDBsum" id="7RIM"/>
<dbReference type="PDBsum" id="7RIP"/>
<dbReference type="PDBsum" id="7RIQ"/>
<dbReference type="PDBsum" id="7RIW"/>
<dbReference type="PDBsum" id="7RIX"/>
<dbReference type="PDBsum" id="7RIY"/>
<dbReference type="PDBsum" id="7UI9"/>
<dbReference type="PDBsum" id="7UIF"/>
<dbReference type="PDBsum" id="7UIO"/>
<dbReference type="PDBsum" id="7ZS9"/>
<dbReference type="PDBsum" id="7ZSA"/>
<dbReference type="PDBsum" id="7ZSB"/>
<dbReference type="PDBsum" id="8CEN"/>
<dbReference type="PDBsum" id="8CEO"/>
<dbReference type="PDBsum" id="8JCH"/>
<dbReference type="PDBsum" id="8K5P"/>
<dbReference type="PDBsum" id="8RAM"/>
<dbReference type="PDBsum" id="8RAP"/>
<dbReference type="PDBsum" id="8TUG"/>
<dbReference type="PDBsum" id="8TVP"/>
<dbReference type="PDBsum" id="8TVQ"/>
<dbReference type="PDBsum" id="8TVS"/>
<dbReference type="PDBsum" id="8TVV"/>
<dbReference type="PDBsum" id="8TVW"/>
<dbReference type="PDBsum" id="8TVX"/>
<dbReference type="PDBsum" id="8TVY"/>
<dbReference type="PDBsum" id="8UKQ"/>
<dbReference type="PDBsum" id="8UKR"/>
<dbReference type="PDBsum" id="8UKS"/>
<dbReference type="PDBsum" id="8UKT"/>
<dbReference type="PDBsum" id="8UKU"/>
<dbReference type="PDBsum" id="8UMH"/>
<dbReference type="PDBsum" id="8UMI"/>
<dbReference type="PDBsum" id="8UOQ"/>
<dbReference type="PDBsum" id="8UOT"/>
<dbReference type="PDBsum" id="9BVT"/>
<dbReference type="PDBsum" id="9BW0"/>
<dbReference type="PDBsum" id="9JA1"/>
<dbReference type="EMDB" id="EMD-0090"/>
<dbReference type="EMDB" id="EMD-0091"/>
<dbReference type="EMDB" id="EMD-0092"/>
<dbReference type="EMDB" id="EMD-0633"/>
<dbReference type="EMDB" id="EMD-12449"/>
<dbReference type="EMDB" id="EMD-12450"/>
<dbReference type="EMDB" id="EMD-12719"/>
<dbReference type="EMDB" id="EMD-12720"/>
<dbReference type="EMDB" id="EMD-12743"/>
<dbReference type="EMDB" id="EMD-12744"/>
<dbReference type="EMDB" id="EMD-12745"/>
<dbReference type="EMDB" id="EMD-14927"/>
<dbReference type="EMDB" id="EMD-14928"/>
<dbReference type="EMDB" id="EMD-14929"/>
<dbReference type="EMDB" id="EMD-16610"/>
<dbReference type="EMDB" id="EMD-16611"/>
<dbReference type="EMDB" id="EMD-19019"/>
<dbReference type="EMDB" id="EMD-19022"/>
<dbReference type="EMDB" id="EMD-26542"/>
<dbReference type="EMDB" id="EMD-26544"/>
<dbReference type="EMDB" id="EMD-26551"/>
<dbReference type="EMDB" id="EMD-2784"/>
<dbReference type="EMDB" id="EMD-2785"/>
<dbReference type="EMDB" id="EMD-2786"/>
<dbReference type="EMDB" id="EMD-36162"/>
<dbReference type="EMDB" id="EMD-36908"/>
<dbReference type="EMDB" id="EMD-3846"/>
<dbReference type="EMDB" id="EMD-3850"/>
<dbReference type="EMDB" id="EMD-42437"/>
<dbReference type="EMDB" id="EMD-42438"/>
<dbReference type="EMDB" id="EMD-4429"/>
<dbReference type="EMDB" id="EMD-61287"/>
<dbReference type="EMDB" id="EMD-8305"/>
<dbReference type="EMDB" id="EMD-8735"/>
<dbReference type="EMDB" id="EMD-8737"/>
<dbReference type="SMR" id="P38902"/>
<dbReference type="BioGRID" id="34399">
    <property type="interactions" value="405"/>
</dbReference>
<dbReference type="ComplexPortal" id="CPX-2662">
    <property type="entry name" value="DNA-directed RNA polymerase II complex"/>
</dbReference>
<dbReference type="DIP" id="DIP-937N"/>
<dbReference type="FunCoup" id="P38902">
    <property type="interactions" value="673"/>
</dbReference>
<dbReference type="IntAct" id="P38902">
    <property type="interactions" value="47"/>
</dbReference>
<dbReference type="MINT" id="P38902"/>
<dbReference type="STRING" id="4932.YOL005C"/>
<dbReference type="iPTMnet" id="P38902"/>
<dbReference type="PaxDb" id="4932-YOL005C"/>
<dbReference type="PeptideAtlas" id="P38902"/>
<dbReference type="EnsemblFungi" id="YOL005C_mRNA">
    <property type="protein sequence ID" value="YOL005C"/>
    <property type="gene ID" value="YOL005C"/>
</dbReference>
<dbReference type="GeneID" id="854157"/>
<dbReference type="KEGG" id="sce:YOL005C"/>
<dbReference type="AGR" id="SGD:S000005365"/>
<dbReference type="SGD" id="S000005365">
    <property type="gene designation" value="RPB11"/>
</dbReference>
<dbReference type="VEuPathDB" id="FungiDB:YOL005C"/>
<dbReference type="eggNOG" id="KOG4392">
    <property type="taxonomic scope" value="Eukaryota"/>
</dbReference>
<dbReference type="HOGENOM" id="CLU_090381_2_1_1"/>
<dbReference type="InParanoid" id="P38902"/>
<dbReference type="OMA" id="MNAPSRY"/>
<dbReference type="OrthoDB" id="10248581at2759"/>
<dbReference type="BioCyc" id="YEAST:G3O-33422-MONOMER"/>
<dbReference type="Reactome" id="R-SCE-113418">
    <property type="pathway name" value="Formation of the Early Elongation Complex"/>
</dbReference>
<dbReference type="Reactome" id="R-SCE-674695">
    <property type="pathway name" value="RNA Polymerase II Pre-transcription Events"/>
</dbReference>
<dbReference type="Reactome" id="R-SCE-6781823">
    <property type="pathway name" value="Formation of TC-NER Pre-Incision Complex"/>
</dbReference>
<dbReference type="Reactome" id="R-SCE-6782135">
    <property type="pathway name" value="Dual incision in TC-NER"/>
</dbReference>
<dbReference type="Reactome" id="R-SCE-6782210">
    <property type="pathway name" value="Gap-filling DNA repair synthesis and ligation in TC-NER"/>
</dbReference>
<dbReference type="Reactome" id="R-SCE-6796648">
    <property type="pathway name" value="TP53 Regulates Transcription of DNA Repair Genes"/>
</dbReference>
<dbReference type="Reactome" id="R-SCE-6807505">
    <property type="pathway name" value="RNA polymerase II transcribes snRNA genes"/>
</dbReference>
<dbReference type="Reactome" id="R-SCE-72086">
    <property type="pathway name" value="mRNA Capping"/>
</dbReference>
<dbReference type="Reactome" id="R-SCE-72203">
    <property type="pathway name" value="Processing of Capped Intron-Containing Pre-mRNA"/>
</dbReference>
<dbReference type="Reactome" id="R-SCE-73776">
    <property type="pathway name" value="RNA Polymerase II Promoter Escape"/>
</dbReference>
<dbReference type="Reactome" id="R-SCE-73779">
    <property type="pathway name" value="RNA Polymerase II Transcription Pre-Initiation And Promoter Opening"/>
</dbReference>
<dbReference type="Reactome" id="R-SCE-75953">
    <property type="pathway name" value="RNA Polymerase II Transcription Initiation"/>
</dbReference>
<dbReference type="Reactome" id="R-SCE-76042">
    <property type="pathway name" value="RNA Polymerase II Transcription Initiation And Promoter Clearance"/>
</dbReference>
<dbReference type="Reactome" id="R-SCE-77075">
    <property type="pathway name" value="RNA Pol II CTD phosphorylation and interaction with CE"/>
</dbReference>
<dbReference type="Reactome" id="R-SCE-9018519">
    <property type="pathway name" value="Estrogen-dependent gene expression"/>
</dbReference>
<dbReference type="BioGRID-ORCS" id="854157">
    <property type="hits" value="10 hits in 10 CRISPR screens"/>
</dbReference>
<dbReference type="EvolutionaryTrace" id="P38902"/>
<dbReference type="PRO" id="PR:P38902"/>
<dbReference type="Proteomes" id="UP000002311">
    <property type="component" value="Chromosome XV"/>
</dbReference>
<dbReference type="RNAct" id="P38902">
    <property type="molecule type" value="protein"/>
</dbReference>
<dbReference type="GO" id="GO:0005634">
    <property type="term" value="C:nucleus"/>
    <property type="evidence" value="ECO:0000303"/>
    <property type="project" value="ComplexPortal"/>
</dbReference>
<dbReference type="GO" id="GO:0005665">
    <property type="term" value="C:RNA polymerase II, core complex"/>
    <property type="evidence" value="ECO:0000314"/>
    <property type="project" value="SGD"/>
</dbReference>
<dbReference type="GO" id="GO:0003677">
    <property type="term" value="F:DNA binding"/>
    <property type="evidence" value="ECO:0007669"/>
    <property type="project" value="InterPro"/>
</dbReference>
<dbReference type="GO" id="GO:0003899">
    <property type="term" value="F:DNA-directed RNA polymerase activity"/>
    <property type="evidence" value="ECO:0007669"/>
    <property type="project" value="InterPro"/>
</dbReference>
<dbReference type="GO" id="GO:0046983">
    <property type="term" value="F:protein dimerization activity"/>
    <property type="evidence" value="ECO:0007669"/>
    <property type="project" value="InterPro"/>
</dbReference>
<dbReference type="GO" id="GO:0001172">
    <property type="term" value="P:RNA-templated transcription"/>
    <property type="evidence" value="ECO:0007669"/>
    <property type="project" value="GOC"/>
</dbReference>
<dbReference type="GO" id="GO:0006369">
    <property type="term" value="P:termination of RNA polymerase II transcription"/>
    <property type="evidence" value="ECO:0000315"/>
    <property type="project" value="SGD"/>
</dbReference>
<dbReference type="GO" id="GO:0006366">
    <property type="term" value="P:transcription by RNA polymerase II"/>
    <property type="evidence" value="ECO:0000315"/>
    <property type="project" value="SGD"/>
</dbReference>
<dbReference type="GO" id="GO:0006368">
    <property type="term" value="P:transcription elongation by RNA polymerase II"/>
    <property type="evidence" value="ECO:0000314"/>
    <property type="project" value="ComplexPortal"/>
</dbReference>
<dbReference type="GO" id="GO:0006367">
    <property type="term" value="P:transcription initiation at RNA polymerase II promoter"/>
    <property type="evidence" value="ECO:0000314"/>
    <property type="project" value="ComplexPortal"/>
</dbReference>
<dbReference type="CDD" id="cd06926">
    <property type="entry name" value="RNAP_II_RPB11"/>
    <property type="match status" value="1"/>
</dbReference>
<dbReference type="FunFam" id="3.30.1360.10:FF:000003">
    <property type="entry name" value="DNA-directed RNA polymerase II subunit RPB11"/>
    <property type="match status" value="1"/>
</dbReference>
<dbReference type="Gene3D" id="3.30.1360.10">
    <property type="entry name" value="RNA polymerase, RBP11-like subunit"/>
    <property type="match status" value="1"/>
</dbReference>
<dbReference type="HAMAP" id="MF_00261">
    <property type="entry name" value="RNApol_arch_Rpo11"/>
    <property type="match status" value="1"/>
</dbReference>
<dbReference type="InterPro" id="IPR037685">
    <property type="entry name" value="RBP11"/>
</dbReference>
<dbReference type="InterPro" id="IPR036603">
    <property type="entry name" value="RBP11-like"/>
</dbReference>
<dbReference type="InterPro" id="IPR009025">
    <property type="entry name" value="RBP11-like_dimer"/>
</dbReference>
<dbReference type="InterPro" id="IPR008193">
    <property type="entry name" value="RNA_pol_Rpb11_13-16kDa_CS"/>
</dbReference>
<dbReference type="InterPro" id="IPR022905">
    <property type="entry name" value="Rpo11-like"/>
</dbReference>
<dbReference type="PANTHER" id="PTHR13946">
    <property type="entry name" value="DNA-DIRECTED RNA POLYMERASE I,II,III"/>
    <property type="match status" value="1"/>
</dbReference>
<dbReference type="PANTHER" id="PTHR13946:SF16">
    <property type="entry name" value="DNA-DIRECTED RNA POLYMERASE II SUBUNIT RPB11"/>
    <property type="match status" value="1"/>
</dbReference>
<dbReference type="Pfam" id="PF13656">
    <property type="entry name" value="RNA_pol_L_2"/>
    <property type="match status" value="1"/>
</dbReference>
<dbReference type="SUPFAM" id="SSF55257">
    <property type="entry name" value="RBP11-like subunits of RNA polymerase"/>
    <property type="match status" value="1"/>
</dbReference>
<dbReference type="PROSITE" id="PS01154">
    <property type="entry name" value="RNA_POL_L_13KD"/>
    <property type="match status" value="1"/>
</dbReference>
<feature type="chain" id="PRO_0000149315" description="DNA-directed RNA polymerase II subunit RPB11">
    <location>
        <begin position="1"/>
        <end position="120"/>
    </location>
</feature>
<feature type="mutagenesis site" description="Transcript termination readthrough." evidence="5">
    <original>E</original>
    <variation>G</variation>
    <variation>V</variation>
    <location>
        <position position="108"/>
    </location>
</feature>
<feature type="mutagenesis site" description="Transcript termination readthrough. Lethal." evidence="5">
    <original>E</original>
    <variation>K</variation>
    <location>
        <position position="108"/>
    </location>
</feature>
<feature type="mutagenesis site" description="Transcript termination readthrough." evidence="5">
    <original>L</original>
    <variation>P</variation>
    <location>
        <position position="111"/>
    </location>
</feature>
<feature type="mutagenesis site" description="Transcript termination readthrough." evidence="5">
    <original>L</original>
    <variation>P</variation>
    <location>
        <position position="114"/>
    </location>
</feature>
<feature type="helix" evidence="7">
    <location>
        <begin position="7"/>
        <end position="9"/>
    </location>
</feature>
<feature type="strand" evidence="10">
    <location>
        <begin position="18"/>
        <end position="20"/>
    </location>
</feature>
<feature type="strand" evidence="7">
    <location>
        <begin position="21"/>
        <end position="23"/>
    </location>
</feature>
<feature type="strand" evidence="7">
    <location>
        <begin position="25"/>
        <end position="27"/>
    </location>
</feature>
<feature type="strand" evidence="7">
    <location>
        <begin position="30"/>
        <end position="37"/>
    </location>
</feature>
<feature type="helix" evidence="7">
    <location>
        <begin position="40"/>
        <end position="50"/>
    </location>
</feature>
<feature type="strand" evidence="8">
    <location>
        <begin position="51"/>
        <end position="53"/>
    </location>
</feature>
<feature type="strand" evidence="7">
    <location>
        <begin position="56"/>
        <end position="62"/>
    </location>
</feature>
<feature type="strand" evidence="9">
    <location>
        <begin position="66"/>
        <end position="68"/>
    </location>
</feature>
<feature type="strand" evidence="7">
    <location>
        <begin position="70"/>
        <end position="77"/>
    </location>
</feature>
<feature type="helix" evidence="7">
    <location>
        <begin position="83"/>
        <end position="108"/>
    </location>
</feature>
<feature type="turn" evidence="7">
    <location>
        <begin position="109"/>
        <end position="111"/>
    </location>
</feature>
<sequence>MNAPDRFELFLLGEGESKLKIDPDTKAPNAVVITFEKEDHTLGNLIRAELLNDRKVLFAAYKVEHPFFARFKLRIQTTEGYDPKDALKNACNSIINKLGALKTNFETEWNLQTLAADDAF</sequence>